<organism>
    <name type="scientific">Buchnera aphidicola subsp. Schizaphis graminum (strain Sg)</name>
    <dbReference type="NCBI Taxonomy" id="198804"/>
    <lineage>
        <taxon>Bacteria</taxon>
        <taxon>Pseudomonadati</taxon>
        <taxon>Pseudomonadota</taxon>
        <taxon>Gammaproteobacteria</taxon>
        <taxon>Enterobacterales</taxon>
        <taxon>Erwiniaceae</taxon>
        <taxon>Buchnera</taxon>
    </lineage>
</organism>
<reference key="1">
    <citation type="journal article" date="2002" name="Science">
        <title>50 million years of genomic stasis in endosymbiotic bacteria.</title>
        <authorList>
            <person name="Tamas I."/>
            <person name="Klasson L."/>
            <person name="Canbaeck B."/>
            <person name="Naeslund A.K."/>
            <person name="Eriksson A.-S."/>
            <person name="Wernegreen J.J."/>
            <person name="Sandstroem J.P."/>
            <person name="Moran N.A."/>
            <person name="Andersson S.G.E."/>
        </authorList>
    </citation>
    <scope>NUCLEOTIDE SEQUENCE [LARGE SCALE GENOMIC DNA]</scope>
    <source>
        <strain>Sg</strain>
    </source>
</reference>
<proteinExistence type="inferred from homology"/>
<keyword id="KW-1003">Cell membrane</keyword>
<keyword id="KW-0472">Membrane</keyword>
<keyword id="KW-0812">Transmembrane</keyword>
<keyword id="KW-1133">Transmembrane helix</keyword>
<sequence>MNELNVVNDINHAGNWLIRNQELLFGYVINLTSAIIILISGMFIAKIISNGVNQILITRHIDATIAGFLSALMRYIIITFTLIASLGRIGVQTTSVIAILGAAGMAIGLALQGSLSNFAAGVLLVTLRPLKTGEYVNLGNVAGTVLNIHIFYTTLRTLDGKIVVVPNNKIISGNIINYSREPARRNEFSISVSYNTDIDLVIKVLKRVIENEDRVMKDRDIVIGLSELAPSSLNFIIRCWSSTDELNAVYWDLMVKFKKELDKNNINIPYPQIDVHLYKKNKN</sequence>
<evidence type="ECO:0000255" key="1"/>
<evidence type="ECO:0000305" key="2"/>
<comment type="subcellular location">
    <subcellularLocation>
        <location evidence="2">Cell membrane</location>
        <topology evidence="2">Multi-pass membrane protein</topology>
    </subcellularLocation>
</comment>
<comment type="similarity">
    <text evidence="2">Belongs to the MscS (TC 1.A.23) family.</text>
</comment>
<protein>
    <recommendedName>
        <fullName>Uncharacterized MscS family protein BUsg_437</fullName>
    </recommendedName>
</protein>
<accession>Q8K9B1</accession>
<gene>
    <name type="ordered locus">BUsg_437</name>
</gene>
<feature type="chain" id="PRO_0000110247" description="Uncharacterized MscS family protein BUsg_437">
    <location>
        <begin position="1"/>
        <end position="283"/>
    </location>
</feature>
<feature type="transmembrane region" description="Helical" evidence="1">
    <location>
        <begin position="24"/>
        <end position="44"/>
    </location>
</feature>
<feature type="transmembrane region" description="Helical" evidence="1">
    <location>
        <begin position="64"/>
        <end position="84"/>
    </location>
</feature>
<feature type="transmembrane region" description="Helical" evidence="1">
    <location>
        <begin position="96"/>
        <end position="116"/>
    </location>
</feature>
<dbReference type="EMBL" id="AE013218">
    <property type="protein sequence ID" value="AAM67980.1"/>
    <property type="molecule type" value="Genomic_DNA"/>
</dbReference>
<dbReference type="RefSeq" id="WP_011053947.1">
    <property type="nucleotide sequence ID" value="NC_004061.1"/>
</dbReference>
<dbReference type="SMR" id="Q8K9B1"/>
<dbReference type="STRING" id="198804.BUsg_437"/>
<dbReference type="GeneID" id="93003909"/>
<dbReference type="KEGG" id="bas:BUsg_437"/>
<dbReference type="eggNOG" id="COG0668">
    <property type="taxonomic scope" value="Bacteria"/>
</dbReference>
<dbReference type="HOGENOM" id="CLU_037945_1_1_6"/>
<dbReference type="Proteomes" id="UP000000416">
    <property type="component" value="Chromosome"/>
</dbReference>
<dbReference type="GO" id="GO:0005886">
    <property type="term" value="C:plasma membrane"/>
    <property type="evidence" value="ECO:0007669"/>
    <property type="project" value="UniProtKB-SubCell"/>
</dbReference>
<dbReference type="GO" id="GO:0008381">
    <property type="term" value="F:mechanosensitive monoatomic ion channel activity"/>
    <property type="evidence" value="ECO:0007669"/>
    <property type="project" value="InterPro"/>
</dbReference>
<dbReference type="Gene3D" id="1.10.287.1260">
    <property type="match status" value="1"/>
</dbReference>
<dbReference type="Gene3D" id="2.30.30.60">
    <property type="match status" value="1"/>
</dbReference>
<dbReference type="Gene3D" id="3.30.70.100">
    <property type="match status" value="1"/>
</dbReference>
<dbReference type="InterPro" id="IPR010920">
    <property type="entry name" value="LSM_dom_sf"/>
</dbReference>
<dbReference type="InterPro" id="IPR049142">
    <property type="entry name" value="MS_channel_1st"/>
</dbReference>
<dbReference type="InterPro" id="IPR049278">
    <property type="entry name" value="MS_channel_C"/>
</dbReference>
<dbReference type="InterPro" id="IPR008910">
    <property type="entry name" value="MSC_TM_helix"/>
</dbReference>
<dbReference type="InterPro" id="IPR045275">
    <property type="entry name" value="MscS_archaea/bacteria_type"/>
</dbReference>
<dbReference type="InterPro" id="IPR023408">
    <property type="entry name" value="MscS_beta-dom_sf"/>
</dbReference>
<dbReference type="InterPro" id="IPR006685">
    <property type="entry name" value="MscS_channel_2nd"/>
</dbReference>
<dbReference type="InterPro" id="IPR011066">
    <property type="entry name" value="MscS_channel_C_sf"/>
</dbReference>
<dbReference type="InterPro" id="IPR006686">
    <property type="entry name" value="MscS_channel_CS"/>
</dbReference>
<dbReference type="InterPro" id="IPR011014">
    <property type="entry name" value="MscS_channel_TM-2"/>
</dbReference>
<dbReference type="NCBIfam" id="NF007662">
    <property type="entry name" value="PRK10334.1"/>
    <property type="match status" value="1"/>
</dbReference>
<dbReference type="PANTHER" id="PTHR30221">
    <property type="entry name" value="SMALL-CONDUCTANCE MECHANOSENSITIVE CHANNEL"/>
    <property type="match status" value="1"/>
</dbReference>
<dbReference type="PANTHER" id="PTHR30221:SF1">
    <property type="entry name" value="SMALL-CONDUCTANCE MECHANOSENSITIVE CHANNEL"/>
    <property type="match status" value="1"/>
</dbReference>
<dbReference type="Pfam" id="PF21088">
    <property type="entry name" value="MS_channel_1st"/>
    <property type="match status" value="1"/>
</dbReference>
<dbReference type="Pfam" id="PF05552">
    <property type="entry name" value="MS_channel_1st_1"/>
    <property type="match status" value="1"/>
</dbReference>
<dbReference type="Pfam" id="PF00924">
    <property type="entry name" value="MS_channel_2nd"/>
    <property type="match status" value="1"/>
</dbReference>
<dbReference type="Pfam" id="PF21082">
    <property type="entry name" value="MS_channel_3rd"/>
    <property type="match status" value="1"/>
</dbReference>
<dbReference type="SUPFAM" id="SSF82689">
    <property type="entry name" value="Mechanosensitive channel protein MscS (YggB), C-terminal domain"/>
    <property type="match status" value="1"/>
</dbReference>
<dbReference type="SUPFAM" id="SSF82861">
    <property type="entry name" value="Mechanosensitive channel protein MscS (YggB), transmembrane region"/>
    <property type="match status" value="1"/>
</dbReference>
<dbReference type="SUPFAM" id="SSF50182">
    <property type="entry name" value="Sm-like ribonucleoproteins"/>
    <property type="match status" value="1"/>
</dbReference>
<dbReference type="PROSITE" id="PS01246">
    <property type="entry name" value="UPF0003"/>
    <property type="match status" value="1"/>
</dbReference>
<name>Y437_BUCAP</name>